<dbReference type="EC" id="2.7.7.6" evidence="1"/>
<dbReference type="EMBL" id="AE016822">
    <property type="protein sequence ID" value="AAT89769.1"/>
    <property type="molecule type" value="Genomic_DNA"/>
</dbReference>
<dbReference type="RefSeq" id="WP_011186754.1">
    <property type="nucleotide sequence ID" value="NC_006087.1"/>
</dbReference>
<dbReference type="SMR" id="Q6ACX5"/>
<dbReference type="STRING" id="281090.Lxx20640"/>
<dbReference type="KEGG" id="lxx:Lxx20640"/>
<dbReference type="eggNOG" id="COG0085">
    <property type="taxonomic scope" value="Bacteria"/>
</dbReference>
<dbReference type="HOGENOM" id="CLU_000524_4_1_11"/>
<dbReference type="Proteomes" id="UP000001306">
    <property type="component" value="Chromosome"/>
</dbReference>
<dbReference type="GO" id="GO:0000428">
    <property type="term" value="C:DNA-directed RNA polymerase complex"/>
    <property type="evidence" value="ECO:0007669"/>
    <property type="project" value="UniProtKB-KW"/>
</dbReference>
<dbReference type="GO" id="GO:0003677">
    <property type="term" value="F:DNA binding"/>
    <property type="evidence" value="ECO:0007669"/>
    <property type="project" value="UniProtKB-UniRule"/>
</dbReference>
<dbReference type="GO" id="GO:0003899">
    <property type="term" value="F:DNA-directed RNA polymerase activity"/>
    <property type="evidence" value="ECO:0007669"/>
    <property type="project" value="UniProtKB-UniRule"/>
</dbReference>
<dbReference type="GO" id="GO:0032549">
    <property type="term" value="F:ribonucleoside binding"/>
    <property type="evidence" value="ECO:0007669"/>
    <property type="project" value="InterPro"/>
</dbReference>
<dbReference type="GO" id="GO:0006351">
    <property type="term" value="P:DNA-templated transcription"/>
    <property type="evidence" value="ECO:0007669"/>
    <property type="project" value="UniProtKB-UniRule"/>
</dbReference>
<dbReference type="CDD" id="cd00653">
    <property type="entry name" value="RNA_pol_B_RPB2"/>
    <property type="match status" value="1"/>
</dbReference>
<dbReference type="FunFam" id="3.90.1800.10:FF:000001">
    <property type="entry name" value="DNA-directed RNA polymerase subunit beta"/>
    <property type="match status" value="1"/>
</dbReference>
<dbReference type="Gene3D" id="2.40.50.100">
    <property type="match status" value="1"/>
</dbReference>
<dbReference type="Gene3D" id="2.40.50.150">
    <property type="match status" value="1"/>
</dbReference>
<dbReference type="Gene3D" id="3.90.1100.10">
    <property type="match status" value="1"/>
</dbReference>
<dbReference type="Gene3D" id="2.30.150.10">
    <property type="entry name" value="DNA-directed RNA polymerase, beta subunit, external 1 domain"/>
    <property type="match status" value="1"/>
</dbReference>
<dbReference type="Gene3D" id="2.40.270.10">
    <property type="entry name" value="DNA-directed RNA polymerase, subunit 2, domain 6"/>
    <property type="match status" value="1"/>
</dbReference>
<dbReference type="Gene3D" id="3.90.1800.10">
    <property type="entry name" value="RNA polymerase alpha subunit dimerisation domain"/>
    <property type="match status" value="1"/>
</dbReference>
<dbReference type="Gene3D" id="3.90.1110.10">
    <property type="entry name" value="RNA polymerase Rpb2, domain 2"/>
    <property type="match status" value="1"/>
</dbReference>
<dbReference type="HAMAP" id="MF_01321">
    <property type="entry name" value="RNApol_bact_RpoB"/>
    <property type="match status" value="1"/>
</dbReference>
<dbReference type="InterPro" id="IPR042107">
    <property type="entry name" value="DNA-dir_RNA_pol_bsu_ext_1_sf"/>
</dbReference>
<dbReference type="InterPro" id="IPR019462">
    <property type="entry name" value="DNA-dir_RNA_pol_bsu_external_1"/>
</dbReference>
<dbReference type="InterPro" id="IPR015712">
    <property type="entry name" value="DNA-dir_RNA_pol_su2"/>
</dbReference>
<dbReference type="InterPro" id="IPR007120">
    <property type="entry name" value="DNA-dir_RNAP_su2_dom"/>
</dbReference>
<dbReference type="InterPro" id="IPR037033">
    <property type="entry name" value="DNA-dir_RNAP_su2_hyb_sf"/>
</dbReference>
<dbReference type="InterPro" id="IPR010243">
    <property type="entry name" value="RNA_pol_bsu_bac"/>
</dbReference>
<dbReference type="InterPro" id="IPR007121">
    <property type="entry name" value="RNA_pol_bsu_CS"/>
</dbReference>
<dbReference type="InterPro" id="IPR007644">
    <property type="entry name" value="RNA_pol_bsu_protrusion"/>
</dbReference>
<dbReference type="InterPro" id="IPR007642">
    <property type="entry name" value="RNA_pol_Rpb2_2"/>
</dbReference>
<dbReference type="InterPro" id="IPR037034">
    <property type="entry name" value="RNA_pol_Rpb2_2_sf"/>
</dbReference>
<dbReference type="InterPro" id="IPR007645">
    <property type="entry name" value="RNA_pol_Rpb2_3"/>
</dbReference>
<dbReference type="InterPro" id="IPR007641">
    <property type="entry name" value="RNA_pol_Rpb2_7"/>
</dbReference>
<dbReference type="InterPro" id="IPR014724">
    <property type="entry name" value="RNA_pol_RPB2_OB-fold"/>
</dbReference>
<dbReference type="NCBIfam" id="NF001616">
    <property type="entry name" value="PRK00405.1"/>
    <property type="match status" value="1"/>
</dbReference>
<dbReference type="NCBIfam" id="TIGR02013">
    <property type="entry name" value="rpoB"/>
    <property type="match status" value="1"/>
</dbReference>
<dbReference type="PANTHER" id="PTHR20856">
    <property type="entry name" value="DNA-DIRECTED RNA POLYMERASE I SUBUNIT 2"/>
    <property type="match status" value="1"/>
</dbReference>
<dbReference type="Pfam" id="PF04563">
    <property type="entry name" value="RNA_pol_Rpb2_1"/>
    <property type="match status" value="1"/>
</dbReference>
<dbReference type="Pfam" id="PF04561">
    <property type="entry name" value="RNA_pol_Rpb2_2"/>
    <property type="match status" value="1"/>
</dbReference>
<dbReference type="Pfam" id="PF04565">
    <property type="entry name" value="RNA_pol_Rpb2_3"/>
    <property type="match status" value="1"/>
</dbReference>
<dbReference type="Pfam" id="PF10385">
    <property type="entry name" value="RNA_pol_Rpb2_45"/>
    <property type="match status" value="1"/>
</dbReference>
<dbReference type="Pfam" id="PF00562">
    <property type="entry name" value="RNA_pol_Rpb2_6"/>
    <property type="match status" value="1"/>
</dbReference>
<dbReference type="Pfam" id="PF04560">
    <property type="entry name" value="RNA_pol_Rpb2_7"/>
    <property type="match status" value="1"/>
</dbReference>
<dbReference type="SUPFAM" id="SSF64484">
    <property type="entry name" value="beta and beta-prime subunits of DNA dependent RNA-polymerase"/>
    <property type="match status" value="1"/>
</dbReference>
<dbReference type="PROSITE" id="PS01166">
    <property type="entry name" value="RNA_POL_BETA"/>
    <property type="match status" value="1"/>
</dbReference>
<proteinExistence type="inferred from homology"/>
<evidence type="ECO:0000255" key="1">
    <source>
        <dbReference type="HAMAP-Rule" id="MF_01321"/>
    </source>
</evidence>
<keyword id="KW-0240">DNA-directed RNA polymerase</keyword>
<keyword id="KW-0548">Nucleotidyltransferase</keyword>
<keyword id="KW-1185">Reference proteome</keyword>
<keyword id="KW-0804">Transcription</keyword>
<keyword id="KW-0808">Transferase</keyword>
<accession>Q6ACX5</accession>
<reference key="1">
    <citation type="journal article" date="2004" name="Mol. Plant Microbe Interact.">
        <title>The genome sequence of the Gram-positive sugarcane pathogen Leifsonia xyli subsp. xyli.</title>
        <authorList>
            <person name="Monteiro-Vitorello C.B."/>
            <person name="Camargo L.E.A."/>
            <person name="Van Sluys M.A."/>
            <person name="Kitajima J.P."/>
            <person name="Truffi D."/>
            <person name="do Amaral A.M."/>
            <person name="Harakava R."/>
            <person name="de Oliveira J.C.F."/>
            <person name="Wood D."/>
            <person name="de Oliveira M.C."/>
            <person name="Miyaki C.Y."/>
            <person name="Takita M.A."/>
            <person name="da Silva A.C.R."/>
            <person name="Furlan L.R."/>
            <person name="Carraro D.M."/>
            <person name="Camarotte G."/>
            <person name="Almeida N.F. Jr."/>
            <person name="Carrer H."/>
            <person name="Coutinho L.L."/>
            <person name="El-Dorry H.A."/>
            <person name="Ferro M.I.T."/>
            <person name="Gagliardi P.R."/>
            <person name="Giglioti E."/>
            <person name="Goldman M.H.S."/>
            <person name="Goldman G.H."/>
            <person name="Kimura E.T."/>
            <person name="Ferro E.S."/>
            <person name="Kuramae E.E."/>
            <person name="Lemos E.G.M."/>
            <person name="Lemos M.V.F."/>
            <person name="Mauro S.M.Z."/>
            <person name="Machado M.A."/>
            <person name="Marino C.L."/>
            <person name="Menck C.F."/>
            <person name="Nunes L.R."/>
            <person name="Oliveira R.C."/>
            <person name="Pereira G.G."/>
            <person name="Siqueira W."/>
            <person name="de Souza A.A."/>
            <person name="Tsai S.M."/>
            <person name="Zanca A.S."/>
            <person name="Simpson A.J.G."/>
            <person name="Brumbley S.M."/>
            <person name="Setubal J.C."/>
        </authorList>
    </citation>
    <scope>NUCLEOTIDE SEQUENCE [LARGE SCALE GENOMIC DNA]</scope>
    <source>
        <strain>CTCB07</strain>
    </source>
</reference>
<organism>
    <name type="scientific">Leifsonia xyli subsp. xyli (strain CTCB07)</name>
    <dbReference type="NCBI Taxonomy" id="281090"/>
    <lineage>
        <taxon>Bacteria</taxon>
        <taxon>Bacillati</taxon>
        <taxon>Actinomycetota</taxon>
        <taxon>Actinomycetes</taxon>
        <taxon>Micrococcales</taxon>
        <taxon>Microbacteriaceae</taxon>
        <taxon>Leifsonia</taxon>
    </lineage>
</organism>
<gene>
    <name evidence="1" type="primary">rpoB</name>
    <name type="ordered locus">Lxx20640</name>
</gene>
<name>RPOB_LEIXX</name>
<protein>
    <recommendedName>
        <fullName evidence="1">DNA-directed RNA polymerase subunit beta</fullName>
        <shortName evidence="1">RNAP subunit beta</shortName>
        <ecNumber evidence="1">2.7.7.6</ecNumber>
    </recommendedName>
    <alternativeName>
        <fullName evidence="1">RNA polymerase subunit beta</fullName>
    </alternativeName>
    <alternativeName>
        <fullName evidence="1">Transcriptase subunit beta</fullName>
    </alternativeName>
</protein>
<feature type="chain" id="PRO_0000224070" description="DNA-directed RNA polymerase subunit beta">
    <location>
        <begin position="1"/>
        <end position="1165"/>
    </location>
</feature>
<comment type="function">
    <text evidence="1">DNA-dependent RNA polymerase catalyzes the transcription of DNA into RNA using the four ribonucleoside triphosphates as substrates.</text>
</comment>
<comment type="catalytic activity">
    <reaction evidence="1">
        <text>RNA(n) + a ribonucleoside 5'-triphosphate = RNA(n+1) + diphosphate</text>
        <dbReference type="Rhea" id="RHEA:21248"/>
        <dbReference type="Rhea" id="RHEA-COMP:14527"/>
        <dbReference type="Rhea" id="RHEA-COMP:17342"/>
        <dbReference type="ChEBI" id="CHEBI:33019"/>
        <dbReference type="ChEBI" id="CHEBI:61557"/>
        <dbReference type="ChEBI" id="CHEBI:140395"/>
        <dbReference type="EC" id="2.7.7.6"/>
    </reaction>
</comment>
<comment type="subunit">
    <text evidence="1">The RNAP catalytic core consists of 2 alpha, 1 beta, 1 beta' and 1 omega subunit. When a sigma factor is associated with the core the holoenzyme is formed, which can initiate transcription.</text>
</comment>
<comment type="similarity">
    <text evidence="1">Belongs to the RNA polymerase beta chain family.</text>
</comment>
<sequence>MAAARNATNNDKTLKNGRDVSRLSFAKITDTLTVPDLLALQTESFDWLVGNDAWQARVAAAEAQGRQDLPAATGLEEIFEEISPIEDLGETMQLSFTNPFLEEKKYSIDECKEKGRTYAAPLYVEAEFMNHLTGEIKTQTVFMGDFPLMTERGTFIINGTERVVVSQLVRSPGVYFEAAADKTSDKDIYSARVIPSRGSWLEFEIDKRDQVGVRIDRKRKQSVTVFLKALGLTSEEILAEFAGFQSIELTLEKDAILTKEEALKDIYRKLRPGEQVAAEAARALLDNFYFNPKRYDLAKVGRYKINRKLGLEAPLTDSVLTVQDIIATIKYLVSLHDGQTSFTGLRSGVETDIRLDIDDIDHFGNRRIRAVGELIQNQVRTGLSRMERVVRERMTTQDIEAITPQTLINVRPVVAAIKEFFGTSQLSQFMDQNNPLAGLTHKRRLSALGPGGLSRERAGVEVRDVHPSHYGRMCPIETPEGPNIGLIGSLASFARINSFGFIETPYRKVVDGLVTDQIDYLTASEEDDFVVAQANAPLDARGHFVEERVLARQKGGEVDLVPAEEIGYMDVSPRQMVSVGTSLIPFLEHDDANRALMGANMQRQAVPLLRSESPVVGTGMEGYAAIDAGDVVIAEKSGIVSEVSADAVTVQADDGTVKTYYLRKFDRSNQGTSYNHRVVVDEGDRIEAGEVVADGPATENGELALGKNLLVAFMPWEGHNFEDAIILSQNLVKDDTLSSIHIEEYEVDARDTKLGKEEITRDLPNVSPDLLADLDERGIIRIGAEVRPGDILVGKVTPKGETELSAEERLLRAIFNEKSREVRDTSLKVPHGEEGTIIGVKVFDAQDGDDELGSGVNQRVVVYIAQKRKITAGDKLAGRHGNKGVISKILPVEDMPFLADGTPVDVILNPLGVPGRMNFGQVLEIHLGWIAKNGWEIKGKPKWAAELPETAFSAAPNTKVATPVFDGAKEEEIAGLLDVTLPTRDGDRLIGSSGKTQLFDGRSGEPYPDPVSVGYMYILKLHHLVDDKIHARSTGPYSMITQQPLGGKAQFGGQRFGEMEVWALEAYGAAYALQELLTIKSDDILGRVKVYEAIVKGENIQEPGIPESFKVLIKEMQSLCLNVEVLSADGQAVSLRDADDEAFRAAEELGINISSRFESSSIDEI</sequence>